<protein>
    <recommendedName>
        <fullName evidence="1">Large ribosomal subunit protein bL12</fullName>
    </recommendedName>
    <alternativeName>
        <fullName evidence="2">50S ribosomal protein L7/L12</fullName>
    </alternativeName>
</protein>
<accession>Q3ATP6</accession>
<gene>
    <name evidence="1" type="primary">rplL</name>
    <name type="ordered locus">Cag_0356</name>
</gene>
<reference key="1">
    <citation type="submission" date="2005-08" db="EMBL/GenBank/DDBJ databases">
        <title>Complete sequence of Chlorobium chlorochromatii CaD3.</title>
        <authorList>
            <consortium name="US DOE Joint Genome Institute"/>
            <person name="Copeland A."/>
            <person name="Lucas S."/>
            <person name="Lapidus A."/>
            <person name="Barry K."/>
            <person name="Detter J.C."/>
            <person name="Glavina T."/>
            <person name="Hammon N."/>
            <person name="Israni S."/>
            <person name="Pitluck S."/>
            <person name="Bryant D."/>
            <person name="Schmutz J."/>
            <person name="Larimer F."/>
            <person name="Land M."/>
            <person name="Kyrpides N."/>
            <person name="Ivanova N."/>
            <person name="Richardson P."/>
        </authorList>
    </citation>
    <scope>NUCLEOTIDE SEQUENCE [LARGE SCALE GENOMIC DNA]</scope>
    <source>
        <strain>CaD3</strain>
    </source>
</reference>
<evidence type="ECO:0000255" key="1">
    <source>
        <dbReference type="HAMAP-Rule" id="MF_00368"/>
    </source>
</evidence>
<evidence type="ECO:0000305" key="2"/>
<proteinExistence type="inferred from homology"/>
<dbReference type="EMBL" id="CP000108">
    <property type="protein sequence ID" value="ABB27629.1"/>
    <property type="molecule type" value="Genomic_DNA"/>
</dbReference>
<dbReference type="SMR" id="Q3ATP6"/>
<dbReference type="STRING" id="340177.Cag_0356"/>
<dbReference type="KEGG" id="cch:Cag_0356"/>
<dbReference type="eggNOG" id="COG0222">
    <property type="taxonomic scope" value="Bacteria"/>
</dbReference>
<dbReference type="HOGENOM" id="CLU_086499_3_2_10"/>
<dbReference type="OrthoDB" id="9811748at2"/>
<dbReference type="GO" id="GO:0022625">
    <property type="term" value="C:cytosolic large ribosomal subunit"/>
    <property type="evidence" value="ECO:0007669"/>
    <property type="project" value="TreeGrafter"/>
</dbReference>
<dbReference type="GO" id="GO:0003729">
    <property type="term" value="F:mRNA binding"/>
    <property type="evidence" value="ECO:0007669"/>
    <property type="project" value="TreeGrafter"/>
</dbReference>
<dbReference type="GO" id="GO:0003735">
    <property type="term" value="F:structural constituent of ribosome"/>
    <property type="evidence" value="ECO:0007669"/>
    <property type="project" value="InterPro"/>
</dbReference>
<dbReference type="GO" id="GO:0006412">
    <property type="term" value="P:translation"/>
    <property type="evidence" value="ECO:0007669"/>
    <property type="project" value="UniProtKB-UniRule"/>
</dbReference>
<dbReference type="CDD" id="cd00387">
    <property type="entry name" value="Ribosomal_L7_L12"/>
    <property type="match status" value="1"/>
</dbReference>
<dbReference type="FunFam" id="3.30.1390.10:FF:000001">
    <property type="entry name" value="50S ribosomal protein L7/L12"/>
    <property type="match status" value="1"/>
</dbReference>
<dbReference type="Gene3D" id="3.30.1390.10">
    <property type="match status" value="1"/>
</dbReference>
<dbReference type="Gene3D" id="1.20.5.710">
    <property type="entry name" value="Single helix bin"/>
    <property type="match status" value="1"/>
</dbReference>
<dbReference type="HAMAP" id="MF_00368">
    <property type="entry name" value="Ribosomal_bL12"/>
    <property type="match status" value="1"/>
</dbReference>
<dbReference type="InterPro" id="IPR000206">
    <property type="entry name" value="Ribosomal_bL12"/>
</dbReference>
<dbReference type="InterPro" id="IPR013823">
    <property type="entry name" value="Ribosomal_bL12_C"/>
</dbReference>
<dbReference type="InterPro" id="IPR014719">
    <property type="entry name" value="Ribosomal_bL12_C/ClpS-like"/>
</dbReference>
<dbReference type="InterPro" id="IPR008932">
    <property type="entry name" value="Ribosomal_bL12_oligo"/>
</dbReference>
<dbReference type="InterPro" id="IPR036235">
    <property type="entry name" value="Ribosomal_bL12_oligo_N_sf"/>
</dbReference>
<dbReference type="NCBIfam" id="TIGR00855">
    <property type="entry name" value="L12"/>
    <property type="match status" value="1"/>
</dbReference>
<dbReference type="PANTHER" id="PTHR45987">
    <property type="entry name" value="39S RIBOSOMAL PROTEIN L12"/>
    <property type="match status" value="1"/>
</dbReference>
<dbReference type="PANTHER" id="PTHR45987:SF4">
    <property type="entry name" value="LARGE RIBOSOMAL SUBUNIT PROTEIN BL12M"/>
    <property type="match status" value="1"/>
</dbReference>
<dbReference type="Pfam" id="PF00542">
    <property type="entry name" value="Ribosomal_L12"/>
    <property type="match status" value="1"/>
</dbReference>
<dbReference type="Pfam" id="PF16320">
    <property type="entry name" value="Ribosomal_L12_N"/>
    <property type="match status" value="1"/>
</dbReference>
<dbReference type="SUPFAM" id="SSF54736">
    <property type="entry name" value="ClpS-like"/>
    <property type="match status" value="1"/>
</dbReference>
<dbReference type="SUPFAM" id="SSF48300">
    <property type="entry name" value="Ribosomal protein L7/12, oligomerisation (N-terminal) domain"/>
    <property type="match status" value="1"/>
</dbReference>
<name>RL7_CHLCH</name>
<comment type="function">
    <text evidence="1">Forms part of the ribosomal stalk which helps the ribosome interact with GTP-bound translation factors. Is thus essential for accurate translation.</text>
</comment>
<comment type="subunit">
    <text evidence="1">Homodimer. Part of the ribosomal stalk of the 50S ribosomal subunit. Forms a multimeric L10(L12)X complex, where L10 forms an elongated spine to which 2 to 4 L12 dimers bind in a sequential fashion. Binds GTP-bound translation factors.</text>
</comment>
<comment type="similarity">
    <text evidence="1">Belongs to the bacterial ribosomal protein bL12 family.</text>
</comment>
<organism>
    <name type="scientific">Chlorobium chlorochromatii (strain CaD3)</name>
    <dbReference type="NCBI Taxonomy" id="340177"/>
    <lineage>
        <taxon>Bacteria</taxon>
        <taxon>Pseudomonadati</taxon>
        <taxon>Chlorobiota</taxon>
        <taxon>Chlorobiia</taxon>
        <taxon>Chlorobiales</taxon>
        <taxon>Chlorobiaceae</taxon>
        <taxon>Chlorobium/Pelodictyon group</taxon>
        <taxon>Chlorobium</taxon>
    </lineage>
</organism>
<feature type="chain" id="PRO_0000243409" description="Large ribosomal subunit protein bL12">
    <location>
        <begin position="1"/>
        <end position="124"/>
    </location>
</feature>
<sequence length="124" mass="12682">MSIENLVEEIGKLTLTEAAALVKALEEKFGVSAAPVAVAAGVAAPAGDVAAVEEQTEFTVVLVAAGESKINVIKVVRSITGLGLKEAKDLVDGAPKNVKEAISKDEAEKIAKELKDAGASVEVK</sequence>
<keyword id="KW-0687">Ribonucleoprotein</keyword>
<keyword id="KW-0689">Ribosomal protein</keyword>